<gene>
    <name evidence="1" type="primary">fmt</name>
    <name type="ordered locus">SP_1735</name>
</gene>
<evidence type="ECO:0000255" key="1">
    <source>
        <dbReference type="HAMAP-Rule" id="MF_00182"/>
    </source>
</evidence>
<reference key="1">
    <citation type="journal article" date="2001" name="Science">
        <title>Complete genome sequence of a virulent isolate of Streptococcus pneumoniae.</title>
        <authorList>
            <person name="Tettelin H."/>
            <person name="Nelson K.E."/>
            <person name="Paulsen I.T."/>
            <person name="Eisen J.A."/>
            <person name="Read T.D."/>
            <person name="Peterson S.N."/>
            <person name="Heidelberg J.F."/>
            <person name="DeBoy R.T."/>
            <person name="Haft D.H."/>
            <person name="Dodson R.J."/>
            <person name="Durkin A.S."/>
            <person name="Gwinn M.L."/>
            <person name="Kolonay J.F."/>
            <person name="Nelson W.C."/>
            <person name="Peterson J.D."/>
            <person name="Umayam L.A."/>
            <person name="White O."/>
            <person name="Salzberg S.L."/>
            <person name="Lewis M.R."/>
            <person name="Radune D."/>
            <person name="Holtzapple E.K."/>
            <person name="Khouri H.M."/>
            <person name="Wolf A.M."/>
            <person name="Utterback T.R."/>
            <person name="Hansen C.L."/>
            <person name="McDonald L.A."/>
            <person name="Feldblyum T.V."/>
            <person name="Angiuoli S.V."/>
            <person name="Dickinson T."/>
            <person name="Hickey E.K."/>
            <person name="Holt I.E."/>
            <person name="Loftus B.J."/>
            <person name="Yang F."/>
            <person name="Smith H.O."/>
            <person name="Venter J.C."/>
            <person name="Dougherty B.A."/>
            <person name="Morrison D.A."/>
            <person name="Hollingshead S.K."/>
            <person name="Fraser C.M."/>
        </authorList>
    </citation>
    <scope>NUCLEOTIDE SEQUENCE [LARGE SCALE GENOMIC DNA]</scope>
    <source>
        <strain>ATCC BAA-334 / TIGR4</strain>
    </source>
</reference>
<dbReference type="EC" id="2.1.2.9" evidence="1"/>
<dbReference type="EMBL" id="AE005672">
    <property type="protein sequence ID" value="AAK75811.1"/>
    <property type="molecule type" value="Genomic_DNA"/>
</dbReference>
<dbReference type="PIR" id="B95202">
    <property type="entry name" value="B95202"/>
</dbReference>
<dbReference type="RefSeq" id="WP_000163693.1">
    <property type="nucleotide sequence ID" value="NZ_CP155539.1"/>
</dbReference>
<dbReference type="SMR" id="Q97PA6"/>
<dbReference type="PaxDb" id="170187-SP_1735"/>
<dbReference type="EnsemblBacteria" id="AAK75811">
    <property type="protein sequence ID" value="AAK75811"/>
    <property type="gene ID" value="SP_1735"/>
</dbReference>
<dbReference type="KEGG" id="spn:SP_1735"/>
<dbReference type="eggNOG" id="COG0223">
    <property type="taxonomic scope" value="Bacteria"/>
</dbReference>
<dbReference type="PhylomeDB" id="Q97PA6"/>
<dbReference type="BioCyc" id="SPNE170187:G1FZB-1758-MONOMER"/>
<dbReference type="Proteomes" id="UP000000585">
    <property type="component" value="Chromosome"/>
</dbReference>
<dbReference type="GO" id="GO:0005829">
    <property type="term" value="C:cytosol"/>
    <property type="evidence" value="ECO:0007669"/>
    <property type="project" value="TreeGrafter"/>
</dbReference>
<dbReference type="GO" id="GO:0004479">
    <property type="term" value="F:methionyl-tRNA formyltransferase activity"/>
    <property type="evidence" value="ECO:0007669"/>
    <property type="project" value="UniProtKB-UniRule"/>
</dbReference>
<dbReference type="CDD" id="cd08646">
    <property type="entry name" value="FMT_core_Met-tRNA-FMT_N"/>
    <property type="match status" value="1"/>
</dbReference>
<dbReference type="CDD" id="cd08704">
    <property type="entry name" value="Met_tRNA_FMT_C"/>
    <property type="match status" value="1"/>
</dbReference>
<dbReference type="FunFam" id="3.10.25.10:FF:000004">
    <property type="entry name" value="Methionyl-tRNA formyltransferase"/>
    <property type="match status" value="1"/>
</dbReference>
<dbReference type="FunFam" id="3.40.50.170:FF:000004">
    <property type="entry name" value="Methionyl-tRNA formyltransferase"/>
    <property type="match status" value="1"/>
</dbReference>
<dbReference type="Gene3D" id="3.10.25.10">
    <property type="entry name" value="Formyl transferase, C-terminal domain"/>
    <property type="match status" value="1"/>
</dbReference>
<dbReference type="Gene3D" id="3.40.50.170">
    <property type="entry name" value="Formyl transferase, N-terminal domain"/>
    <property type="match status" value="1"/>
</dbReference>
<dbReference type="HAMAP" id="MF_00182">
    <property type="entry name" value="Formyl_trans"/>
    <property type="match status" value="1"/>
</dbReference>
<dbReference type="InterPro" id="IPR005794">
    <property type="entry name" value="Fmt"/>
</dbReference>
<dbReference type="InterPro" id="IPR005793">
    <property type="entry name" value="Formyl_trans_C"/>
</dbReference>
<dbReference type="InterPro" id="IPR037022">
    <property type="entry name" value="Formyl_trans_C_sf"/>
</dbReference>
<dbReference type="InterPro" id="IPR002376">
    <property type="entry name" value="Formyl_transf_N"/>
</dbReference>
<dbReference type="InterPro" id="IPR036477">
    <property type="entry name" value="Formyl_transf_N_sf"/>
</dbReference>
<dbReference type="InterPro" id="IPR011034">
    <property type="entry name" value="Formyl_transferase-like_C_sf"/>
</dbReference>
<dbReference type="InterPro" id="IPR001555">
    <property type="entry name" value="GART_AS"/>
</dbReference>
<dbReference type="InterPro" id="IPR044135">
    <property type="entry name" value="Met-tRNA-FMT_C"/>
</dbReference>
<dbReference type="InterPro" id="IPR041711">
    <property type="entry name" value="Met-tRNA-FMT_N"/>
</dbReference>
<dbReference type="NCBIfam" id="TIGR00460">
    <property type="entry name" value="fmt"/>
    <property type="match status" value="1"/>
</dbReference>
<dbReference type="PANTHER" id="PTHR11138">
    <property type="entry name" value="METHIONYL-TRNA FORMYLTRANSFERASE"/>
    <property type="match status" value="1"/>
</dbReference>
<dbReference type="PANTHER" id="PTHR11138:SF5">
    <property type="entry name" value="METHIONYL-TRNA FORMYLTRANSFERASE, MITOCHONDRIAL"/>
    <property type="match status" value="1"/>
</dbReference>
<dbReference type="Pfam" id="PF02911">
    <property type="entry name" value="Formyl_trans_C"/>
    <property type="match status" value="1"/>
</dbReference>
<dbReference type="Pfam" id="PF00551">
    <property type="entry name" value="Formyl_trans_N"/>
    <property type="match status" value="1"/>
</dbReference>
<dbReference type="SUPFAM" id="SSF50486">
    <property type="entry name" value="FMT C-terminal domain-like"/>
    <property type="match status" value="1"/>
</dbReference>
<dbReference type="SUPFAM" id="SSF53328">
    <property type="entry name" value="Formyltransferase"/>
    <property type="match status" value="1"/>
</dbReference>
<dbReference type="PROSITE" id="PS00373">
    <property type="entry name" value="GART"/>
    <property type="match status" value="1"/>
</dbReference>
<name>FMT_STRPN</name>
<accession>Q97PA6</accession>
<proteinExistence type="inferred from homology"/>
<organism>
    <name type="scientific">Streptococcus pneumoniae serotype 4 (strain ATCC BAA-334 / TIGR4)</name>
    <dbReference type="NCBI Taxonomy" id="170187"/>
    <lineage>
        <taxon>Bacteria</taxon>
        <taxon>Bacillati</taxon>
        <taxon>Bacillota</taxon>
        <taxon>Bacilli</taxon>
        <taxon>Lactobacillales</taxon>
        <taxon>Streptococcaceae</taxon>
        <taxon>Streptococcus</taxon>
    </lineage>
</organism>
<comment type="function">
    <text evidence="1">Attaches a formyl group to the free amino group of methionyl-tRNA(fMet). The formyl group appears to play a dual role in the initiator identity of N-formylmethionyl-tRNA by promoting its recognition by IF2 and preventing the misappropriation of this tRNA by the elongation apparatus.</text>
</comment>
<comment type="catalytic activity">
    <reaction evidence="1">
        <text>L-methionyl-tRNA(fMet) + (6R)-10-formyltetrahydrofolate = N-formyl-L-methionyl-tRNA(fMet) + (6S)-5,6,7,8-tetrahydrofolate + H(+)</text>
        <dbReference type="Rhea" id="RHEA:24380"/>
        <dbReference type="Rhea" id="RHEA-COMP:9952"/>
        <dbReference type="Rhea" id="RHEA-COMP:9953"/>
        <dbReference type="ChEBI" id="CHEBI:15378"/>
        <dbReference type="ChEBI" id="CHEBI:57453"/>
        <dbReference type="ChEBI" id="CHEBI:78530"/>
        <dbReference type="ChEBI" id="CHEBI:78844"/>
        <dbReference type="ChEBI" id="CHEBI:195366"/>
        <dbReference type="EC" id="2.1.2.9"/>
    </reaction>
</comment>
<comment type="similarity">
    <text evidence="1">Belongs to the Fmt family.</text>
</comment>
<protein>
    <recommendedName>
        <fullName evidence="1">Methionyl-tRNA formyltransferase</fullName>
        <ecNumber evidence="1">2.1.2.9</ecNumber>
    </recommendedName>
</protein>
<sequence>MTKLIFMGTPDFSATVLKGLLTDDRYEILAVVTQPDRAVGRKKVIQETPVKQAAKEAGLSIYQPEKLSGSPEMEDLMKLGADGIVTAAFGQFLPSKLLDSMDFAVNVHASLLPRHRGGAPIHYALIQGDEEAGVTIMEMVKEMDAGDMISRRSIPITDEDNVGTLFEKLALVGRDLLLDTLPAYIAGDIKPEPQDTSQVTFSPNIKPEEEKLDWNKTNRQLFNQIRGMNPWPVAHTFLKGDRFKIYEALPVEGQGNPGEILSIGKKELIVATAEGALSLKQVQPAGKPKMDIASFLNGVGRTLTVGERFGD</sequence>
<keyword id="KW-0648">Protein biosynthesis</keyword>
<keyword id="KW-1185">Reference proteome</keyword>
<keyword id="KW-0808">Transferase</keyword>
<feature type="chain" id="PRO_0000083058" description="Methionyl-tRNA formyltransferase">
    <location>
        <begin position="1"/>
        <end position="311"/>
    </location>
</feature>
<feature type="binding site" evidence="1">
    <location>
        <begin position="110"/>
        <end position="113"/>
    </location>
    <ligand>
        <name>(6S)-5,6,7,8-tetrahydrofolate</name>
        <dbReference type="ChEBI" id="CHEBI:57453"/>
    </ligand>
</feature>